<evidence type="ECO:0000250" key="1"/>
<evidence type="ECO:0000255" key="2">
    <source>
        <dbReference type="HAMAP-Rule" id="MF_01491"/>
    </source>
</evidence>
<organism>
    <name type="scientific">Staphylococcus aureus (strain MSSA476)</name>
    <dbReference type="NCBI Taxonomy" id="282459"/>
    <lineage>
        <taxon>Bacteria</taxon>
        <taxon>Bacillati</taxon>
        <taxon>Bacillota</taxon>
        <taxon>Bacilli</taxon>
        <taxon>Bacillales</taxon>
        <taxon>Staphylococcaceae</taxon>
        <taxon>Staphylococcus</taxon>
    </lineage>
</organism>
<feature type="chain" id="PRO_0000286848" description="Ribonuclease J 1">
    <location>
        <begin position="1"/>
        <end position="565"/>
    </location>
</feature>
<feature type="binding site" evidence="2">
    <location>
        <position position="74"/>
    </location>
    <ligand>
        <name>Zn(2+)</name>
        <dbReference type="ChEBI" id="CHEBI:29105"/>
        <label>1</label>
        <note>catalytic</note>
    </ligand>
</feature>
<feature type="binding site" evidence="2">
    <location>
        <position position="76"/>
    </location>
    <ligand>
        <name>Zn(2+)</name>
        <dbReference type="ChEBI" id="CHEBI:29105"/>
        <label>1</label>
        <note>catalytic</note>
    </ligand>
</feature>
<feature type="binding site" evidence="2">
    <location>
        <position position="78"/>
    </location>
    <ligand>
        <name>Zn(2+)</name>
        <dbReference type="ChEBI" id="CHEBI:29105"/>
        <label>2</label>
        <note>catalytic</note>
    </ligand>
</feature>
<feature type="binding site" evidence="2">
    <location>
        <position position="79"/>
    </location>
    <ligand>
        <name>Zn(2+)</name>
        <dbReference type="ChEBI" id="CHEBI:29105"/>
        <label>2</label>
        <note>catalytic</note>
    </ligand>
</feature>
<feature type="binding site" evidence="2">
    <location>
        <position position="142"/>
    </location>
    <ligand>
        <name>Zn(2+)</name>
        <dbReference type="ChEBI" id="CHEBI:29105"/>
        <label>1</label>
        <note>catalytic</note>
    </ligand>
</feature>
<feature type="binding site" evidence="2">
    <location>
        <position position="164"/>
    </location>
    <ligand>
        <name>Zn(2+)</name>
        <dbReference type="ChEBI" id="CHEBI:29105"/>
        <label>1</label>
        <note>catalytic</note>
    </ligand>
</feature>
<feature type="binding site" evidence="2">
    <location>
        <position position="164"/>
    </location>
    <ligand>
        <name>Zn(2+)</name>
        <dbReference type="ChEBI" id="CHEBI:29105"/>
        <label>2</label>
        <note>catalytic</note>
    </ligand>
</feature>
<feature type="binding site" evidence="2">
    <location>
        <begin position="364"/>
        <end position="368"/>
    </location>
    <ligand>
        <name>substrate</name>
    </ligand>
</feature>
<feature type="binding site" evidence="2">
    <location>
        <position position="390"/>
    </location>
    <ligand>
        <name>Zn(2+)</name>
        <dbReference type="ChEBI" id="CHEBI:29105"/>
        <label>2</label>
        <note>catalytic</note>
    </ligand>
</feature>
<accession>Q6GAC5</accession>
<protein>
    <recommendedName>
        <fullName evidence="2">Ribonuclease J 1</fullName>
        <shortName evidence="2">RNase J1</shortName>
        <ecNumber evidence="2">3.1.-.-</ecNumber>
    </recommendedName>
</protein>
<keyword id="KW-0963">Cytoplasm</keyword>
<keyword id="KW-0255">Endonuclease</keyword>
<keyword id="KW-0269">Exonuclease</keyword>
<keyword id="KW-0378">Hydrolase</keyword>
<keyword id="KW-0479">Metal-binding</keyword>
<keyword id="KW-0540">Nuclease</keyword>
<keyword id="KW-0694">RNA-binding</keyword>
<keyword id="KW-0698">rRNA processing</keyword>
<keyword id="KW-0862">Zinc</keyword>
<gene>
    <name evidence="2" type="primary">rnj1</name>
    <name type="ordered locus">SAS1024</name>
</gene>
<reference key="1">
    <citation type="journal article" date="2004" name="Proc. Natl. Acad. Sci. U.S.A.">
        <title>Complete genomes of two clinical Staphylococcus aureus strains: evidence for the rapid evolution of virulence and drug resistance.</title>
        <authorList>
            <person name="Holden M.T.G."/>
            <person name="Feil E.J."/>
            <person name="Lindsay J.A."/>
            <person name="Peacock S.J."/>
            <person name="Day N.P.J."/>
            <person name="Enright M.C."/>
            <person name="Foster T.J."/>
            <person name="Moore C.E."/>
            <person name="Hurst L."/>
            <person name="Atkin R."/>
            <person name="Barron A."/>
            <person name="Bason N."/>
            <person name="Bentley S.D."/>
            <person name="Chillingworth C."/>
            <person name="Chillingworth T."/>
            <person name="Churcher C."/>
            <person name="Clark L."/>
            <person name="Corton C."/>
            <person name="Cronin A."/>
            <person name="Doggett J."/>
            <person name="Dowd L."/>
            <person name="Feltwell T."/>
            <person name="Hance Z."/>
            <person name="Harris B."/>
            <person name="Hauser H."/>
            <person name="Holroyd S."/>
            <person name="Jagels K."/>
            <person name="James K.D."/>
            <person name="Lennard N."/>
            <person name="Line A."/>
            <person name="Mayes R."/>
            <person name="Moule S."/>
            <person name="Mungall K."/>
            <person name="Ormond D."/>
            <person name="Quail M.A."/>
            <person name="Rabbinowitsch E."/>
            <person name="Rutherford K.M."/>
            <person name="Sanders M."/>
            <person name="Sharp S."/>
            <person name="Simmonds M."/>
            <person name="Stevens K."/>
            <person name="Whitehead S."/>
            <person name="Barrell B.G."/>
            <person name="Spratt B.G."/>
            <person name="Parkhill J."/>
        </authorList>
    </citation>
    <scope>NUCLEOTIDE SEQUENCE [LARGE SCALE GENOMIC DNA]</scope>
    <source>
        <strain>MSSA476</strain>
    </source>
</reference>
<dbReference type="EC" id="3.1.-.-" evidence="2"/>
<dbReference type="EMBL" id="BX571857">
    <property type="protein sequence ID" value="CAG42798.1"/>
    <property type="molecule type" value="Genomic_DNA"/>
</dbReference>
<dbReference type="SMR" id="Q6GAC5"/>
<dbReference type="KEGG" id="sas:SAS1024"/>
<dbReference type="HOGENOM" id="CLU_008727_3_1_9"/>
<dbReference type="GO" id="GO:0005737">
    <property type="term" value="C:cytoplasm"/>
    <property type="evidence" value="ECO:0007669"/>
    <property type="project" value="UniProtKB-SubCell"/>
</dbReference>
<dbReference type="GO" id="GO:0004534">
    <property type="term" value="F:5'-3' RNA exonuclease activity"/>
    <property type="evidence" value="ECO:0007669"/>
    <property type="project" value="UniProtKB-UniRule"/>
</dbReference>
<dbReference type="GO" id="GO:0003723">
    <property type="term" value="F:RNA binding"/>
    <property type="evidence" value="ECO:0007669"/>
    <property type="project" value="UniProtKB-UniRule"/>
</dbReference>
<dbReference type="GO" id="GO:0004521">
    <property type="term" value="F:RNA endonuclease activity"/>
    <property type="evidence" value="ECO:0007669"/>
    <property type="project" value="UniProtKB-UniRule"/>
</dbReference>
<dbReference type="GO" id="GO:0008270">
    <property type="term" value="F:zinc ion binding"/>
    <property type="evidence" value="ECO:0007669"/>
    <property type="project" value="InterPro"/>
</dbReference>
<dbReference type="GO" id="GO:0006364">
    <property type="term" value="P:rRNA processing"/>
    <property type="evidence" value="ECO:0007669"/>
    <property type="project" value="UniProtKB-UniRule"/>
</dbReference>
<dbReference type="CDD" id="cd07714">
    <property type="entry name" value="RNaseJ_MBL-fold"/>
    <property type="match status" value="1"/>
</dbReference>
<dbReference type="FunFam" id="3.10.20.580:FF:000001">
    <property type="entry name" value="Ribonuclease J"/>
    <property type="match status" value="1"/>
</dbReference>
<dbReference type="Gene3D" id="3.10.20.580">
    <property type="match status" value="1"/>
</dbReference>
<dbReference type="Gene3D" id="3.40.50.10710">
    <property type="entry name" value="Metallo-hydrolase/oxidoreductase"/>
    <property type="match status" value="1"/>
</dbReference>
<dbReference type="Gene3D" id="3.60.15.10">
    <property type="entry name" value="Ribonuclease Z/Hydroxyacylglutathione hydrolase-like"/>
    <property type="match status" value="1"/>
</dbReference>
<dbReference type="HAMAP" id="MF_01491">
    <property type="entry name" value="RNase_J_bact"/>
    <property type="match status" value="1"/>
</dbReference>
<dbReference type="InterPro" id="IPR001279">
    <property type="entry name" value="Metallo-B-lactamas"/>
</dbReference>
<dbReference type="InterPro" id="IPR036866">
    <property type="entry name" value="RibonucZ/Hydroxyglut_hydro"/>
</dbReference>
<dbReference type="InterPro" id="IPR011108">
    <property type="entry name" value="RMMBL"/>
</dbReference>
<dbReference type="InterPro" id="IPR004613">
    <property type="entry name" value="RNase_J"/>
</dbReference>
<dbReference type="InterPro" id="IPR042173">
    <property type="entry name" value="RNase_J_2"/>
</dbReference>
<dbReference type="InterPro" id="IPR055132">
    <property type="entry name" value="RNase_J_b_CASP"/>
</dbReference>
<dbReference type="InterPro" id="IPR030854">
    <property type="entry name" value="RNase_J_bac"/>
</dbReference>
<dbReference type="InterPro" id="IPR041636">
    <property type="entry name" value="RNase_J_C"/>
</dbReference>
<dbReference type="InterPro" id="IPR001587">
    <property type="entry name" value="RNase_J_CS"/>
</dbReference>
<dbReference type="NCBIfam" id="TIGR00649">
    <property type="entry name" value="MG423"/>
    <property type="match status" value="1"/>
</dbReference>
<dbReference type="NCBIfam" id="NF047419">
    <property type="entry name" value="RNase_J1_RnjA"/>
    <property type="match status" value="1"/>
</dbReference>
<dbReference type="PANTHER" id="PTHR43694">
    <property type="entry name" value="RIBONUCLEASE J"/>
    <property type="match status" value="1"/>
</dbReference>
<dbReference type="PANTHER" id="PTHR43694:SF1">
    <property type="entry name" value="RIBONUCLEASE J"/>
    <property type="match status" value="1"/>
</dbReference>
<dbReference type="Pfam" id="PF00753">
    <property type="entry name" value="Lactamase_B"/>
    <property type="match status" value="1"/>
</dbReference>
<dbReference type="Pfam" id="PF07521">
    <property type="entry name" value="RMMBL"/>
    <property type="match status" value="1"/>
</dbReference>
<dbReference type="Pfam" id="PF22505">
    <property type="entry name" value="RNase_J_b_CASP"/>
    <property type="match status" value="1"/>
</dbReference>
<dbReference type="Pfam" id="PF17770">
    <property type="entry name" value="RNase_J_C"/>
    <property type="match status" value="1"/>
</dbReference>
<dbReference type="PIRSF" id="PIRSF004803">
    <property type="entry name" value="RnjA"/>
    <property type="match status" value="1"/>
</dbReference>
<dbReference type="SMART" id="SM00849">
    <property type="entry name" value="Lactamase_B"/>
    <property type="match status" value="1"/>
</dbReference>
<dbReference type="SUPFAM" id="SSF56281">
    <property type="entry name" value="Metallo-hydrolase/oxidoreductase"/>
    <property type="match status" value="1"/>
</dbReference>
<dbReference type="PROSITE" id="PS01292">
    <property type="entry name" value="UPF0036"/>
    <property type="match status" value="1"/>
</dbReference>
<name>RNJ1_STAAS</name>
<sequence length="565" mass="62669">MKQLHPNEVGVYALGGLGEIGKNTYAVEYKDEIVIIDAGIKFPDDNLLGIDYVIPDYTYLVQNQDKIVGLFITHGHEDHIGGVPFLLKQLNIPIYGGPLALGLIRNKLEEHHLLRTAKLNEINEDSVIKSKHFTISFYLTTHSIPETYGVIVDTPEGKVVHTGDFKFDFTPVGKPANIAKMAQLGEEGVLCLLSDSTNSLVPDFTLSEREVGQNVDKIFRNCKGRIIFATFASNIYRVQQAVEAAIKNNRKIVTFGRSMENNIKIGMELGYIKAPPETFIEPNKINTVPKHELLILCTGSQGEPMAALSRIANGTHKQIKIIPEDTVVFSSSPIPGNTKSINRTINSLYKAGADVIHSKISNIHTSGHGSQGDQQLMLRLIKPKYFLPIHGEYRMLKAHGETGVECGVEEDNVFIFDIGDVLALTHDSARKAGRIPSGNVLVDGSGIGDIGNVVIRDRKLLSEEGLVIVVVSIDFNTNKLLSGPDIISRGFVYMRESGQLIYDAQRKIKTDVISKLNQNKDIQWHQIKSSIIETLQPYLFEKTARKPMILPVIMKVNEQKESNNK</sequence>
<proteinExistence type="inferred from homology"/>
<comment type="function">
    <text evidence="1">An RNase that has 5'-3' exonuclease and possibly endoonuclease activity. Involved in maturation of rRNA and in some organisms also mRNA maturation and/or decay (By similarity).</text>
</comment>
<comment type="cofactor">
    <cofactor evidence="2">
        <name>Zn(2+)</name>
        <dbReference type="ChEBI" id="CHEBI:29105"/>
    </cofactor>
    <text evidence="2">Binds up to 2 Zn(2+) ions per subunit. It is not clear if Zn(2+) or Mg(2+) is physiologically important.</text>
</comment>
<comment type="subunit">
    <text evidence="2">Homodimer, may be a subunit of the RNA degradosome.</text>
</comment>
<comment type="subcellular location">
    <subcellularLocation>
        <location evidence="2">Cytoplasm</location>
    </subcellularLocation>
</comment>
<comment type="similarity">
    <text evidence="2">Belongs to the metallo-beta-lactamase superfamily. RNA-metabolizing metallo-beta-lactamase-like family. Bacterial RNase J subfamily.</text>
</comment>